<proteinExistence type="inferred from homology"/>
<dbReference type="EMBL" id="CP000308">
    <property type="protein sequence ID" value="ABG15202.1"/>
    <property type="molecule type" value="Genomic_DNA"/>
</dbReference>
<dbReference type="RefSeq" id="WP_002218949.1">
    <property type="nucleotide sequence ID" value="NZ_CP009906.1"/>
</dbReference>
<dbReference type="SMR" id="Q1C2X0"/>
<dbReference type="GeneID" id="97454255"/>
<dbReference type="KEGG" id="ypa:YPA_3240"/>
<dbReference type="Proteomes" id="UP000001971">
    <property type="component" value="Chromosome"/>
</dbReference>
<dbReference type="GO" id="GO:0015935">
    <property type="term" value="C:small ribosomal subunit"/>
    <property type="evidence" value="ECO:0007669"/>
    <property type="project" value="InterPro"/>
</dbReference>
<dbReference type="GO" id="GO:0019843">
    <property type="term" value="F:rRNA binding"/>
    <property type="evidence" value="ECO:0007669"/>
    <property type="project" value="UniProtKB-UniRule"/>
</dbReference>
<dbReference type="GO" id="GO:0003735">
    <property type="term" value="F:structural constituent of ribosome"/>
    <property type="evidence" value="ECO:0007669"/>
    <property type="project" value="InterPro"/>
</dbReference>
<dbReference type="GO" id="GO:0042274">
    <property type="term" value="P:ribosomal small subunit biogenesis"/>
    <property type="evidence" value="ECO:0007669"/>
    <property type="project" value="TreeGrafter"/>
</dbReference>
<dbReference type="GO" id="GO:0006412">
    <property type="term" value="P:translation"/>
    <property type="evidence" value="ECO:0007669"/>
    <property type="project" value="UniProtKB-UniRule"/>
</dbReference>
<dbReference type="CDD" id="cd00165">
    <property type="entry name" value="S4"/>
    <property type="match status" value="1"/>
</dbReference>
<dbReference type="FunFam" id="1.10.1050.10:FF:000001">
    <property type="entry name" value="30S ribosomal protein S4"/>
    <property type="match status" value="1"/>
</dbReference>
<dbReference type="FunFam" id="3.10.290.10:FF:000001">
    <property type="entry name" value="30S ribosomal protein S4"/>
    <property type="match status" value="1"/>
</dbReference>
<dbReference type="Gene3D" id="1.10.1050.10">
    <property type="entry name" value="Ribosomal Protein S4 Delta 41, Chain A, domain 1"/>
    <property type="match status" value="1"/>
</dbReference>
<dbReference type="Gene3D" id="3.10.290.10">
    <property type="entry name" value="RNA-binding S4 domain"/>
    <property type="match status" value="1"/>
</dbReference>
<dbReference type="HAMAP" id="MF_01306_B">
    <property type="entry name" value="Ribosomal_uS4_B"/>
    <property type="match status" value="1"/>
</dbReference>
<dbReference type="InterPro" id="IPR022801">
    <property type="entry name" value="Ribosomal_uS4"/>
</dbReference>
<dbReference type="InterPro" id="IPR005709">
    <property type="entry name" value="Ribosomal_uS4_bac-type"/>
</dbReference>
<dbReference type="InterPro" id="IPR018079">
    <property type="entry name" value="Ribosomal_uS4_CS"/>
</dbReference>
<dbReference type="InterPro" id="IPR001912">
    <property type="entry name" value="Ribosomal_uS4_N"/>
</dbReference>
<dbReference type="InterPro" id="IPR002942">
    <property type="entry name" value="S4_RNA-bd"/>
</dbReference>
<dbReference type="InterPro" id="IPR036986">
    <property type="entry name" value="S4_RNA-bd_sf"/>
</dbReference>
<dbReference type="NCBIfam" id="NF003717">
    <property type="entry name" value="PRK05327.1"/>
    <property type="match status" value="1"/>
</dbReference>
<dbReference type="NCBIfam" id="TIGR01017">
    <property type="entry name" value="rpsD_bact"/>
    <property type="match status" value="1"/>
</dbReference>
<dbReference type="PANTHER" id="PTHR11831">
    <property type="entry name" value="30S 40S RIBOSOMAL PROTEIN"/>
    <property type="match status" value="1"/>
</dbReference>
<dbReference type="PANTHER" id="PTHR11831:SF4">
    <property type="entry name" value="SMALL RIBOSOMAL SUBUNIT PROTEIN US4M"/>
    <property type="match status" value="1"/>
</dbReference>
<dbReference type="Pfam" id="PF00163">
    <property type="entry name" value="Ribosomal_S4"/>
    <property type="match status" value="1"/>
</dbReference>
<dbReference type="Pfam" id="PF01479">
    <property type="entry name" value="S4"/>
    <property type="match status" value="1"/>
</dbReference>
<dbReference type="SMART" id="SM01390">
    <property type="entry name" value="Ribosomal_S4"/>
    <property type="match status" value="1"/>
</dbReference>
<dbReference type="SMART" id="SM00363">
    <property type="entry name" value="S4"/>
    <property type="match status" value="1"/>
</dbReference>
<dbReference type="SUPFAM" id="SSF55174">
    <property type="entry name" value="Alpha-L RNA-binding motif"/>
    <property type="match status" value="1"/>
</dbReference>
<dbReference type="PROSITE" id="PS00632">
    <property type="entry name" value="RIBOSOMAL_S4"/>
    <property type="match status" value="1"/>
</dbReference>
<dbReference type="PROSITE" id="PS50889">
    <property type="entry name" value="S4"/>
    <property type="match status" value="1"/>
</dbReference>
<feature type="chain" id="PRO_0000293399" description="Small ribosomal subunit protein uS4">
    <location>
        <begin position="1"/>
        <end position="206"/>
    </location>
</feature>
<feature type="domain" description="S4 RNA-binding" evidence="1">
    <location>
        <begin position="96"/>
        <end position="156"/>
    </location>
</feature>
<reference key="1">
    <citation type="journal article" date="2006" name="J. Bacteriol.">
        <title>Complete genome sequence of Yersinia pestis strains Antiqua and Nepal516: evidence of gene reduction in an emerging pathogen.</title>
        <authorList>
            <person name="Chain P.S.G."/>
            <person name="Hu P."/>
            <person name="Malfatti S.A."/>
            <person name="Radnedge L."/>
            <person name="Larimer F."/>
            <person name="Vergez L.M."/>
            <person name="Worsham P."/>
            <person name="Chu M.C."/>
            <person name="Andersen G.L."/>
        </authorList>
    </citation>
    <scope>NUCLEOTIDE SEQUENCE [LARGE SCALE GENOMIC DNA]</scope>
    <source>
        <strain>Antiqua</strain>
    </source>
</reference>
<accession>Q1C2X0</accession>
<sequence>MARYLGPKLKLSRREGTDLFLKSGVRAIDTKCKIEQPPGQHGARKPRLSDYGVQLREKQKVRRIYGVLERQFRNYYKEAARLKGNTGANLLQLLEGRLDNVVYRMGFGATRAESRQLVSHKAIMVNGRVVNIASYQVSPNDVVSIREKAKKQSRVKAALELAEQREKPTWLEVDAVKMEGVFKRIPERTDLSADINEHLIVELYSK</sequence>
<organism>
    <name type="scientific">Yersinia pestis bv. Antiqua (strain Antiqua)</name>
    <dbReference type="NCBI Taxonomy" id="360102"/>
    <lineage>
        <taxon>Bacteria</taxon>
        <taxon>Pseudomonadati</taxon>
        <taxon>Pseudomonadota</taxon>
        <taxon>Gammaproteobacteria</taxon>
        <taxon>Enterobacterales</taxon>
        <taxon>Yersiniaceae</taxon>
        <taxon>Yersinia</taxon>
    </lineage>
</organism>
<gene>
    <name evidence="1" type="primary">rpsD</name>
    <name type="ordered locus">YPA_3240</name>
</gene>
<name>RS4_YERPA</name>
<evidence type="ECO:0000255" key="1">
    <source>
        <dbReference type="HAMAP-Rule" id="MF_01306"/>
    </source>
</evidence>
<evidence type="ECO:0000305" key="2"/>
<keyword id="KW-0687">Ribonucleoprotein</keyword>
<keyword id="KW-0689">Ribosomal protein</keyword>
<keyword id="KW-0694">RNA-binding</keyword>
<keyword id="KW-0699">rRNA-binding</keyword>
<comment type="function">
    <text evidence="1">One of the primary rRNA binding proteins, it binds directly to 16S rRNA where it nucleates assembly of the body of the 30S subunit.</text>
</comment>
<comment type="function">
    <text evidence="1">With S5 and S12 plays an important role in translational accuracy.</text>
</comment>
<comment type="subunit">
    <text evidence="1">Part of the 30S ribosomal subunit. Contacts protein S5. The interaction surface between S4 and S5 is involved in control of translational fidelity.</text>
</comment>
<comment type="similarity">
    <text evidence="1">Belongs to the universal ribosomal protein uS4 family.</text>
</comment>
<protein>
    <recommendedName>
        <fullName evidence="1">Small ribosomal subunit protein uS4</fullName>
    </recommendedName>
    <alternativeName>
        <fullName evidence="2">30S ribosomal protein S4</fullName>
    </alternativeName>
</protein>